<evidence type="ECO:0000255" key="1">
    <source>
        <dbReference type="HAMAP-Rule" id="MF_01365"/>
    </source>
</evidence>
<evidence type="ECO:0000305" key="2"/>
<feature type="chain" id="PRO_1000143946" description="Large ribosomal subunit protein uL6">
    <location>
        <begin position="1"/>
        <end position="180"/>
    </location>
</feature>
<organism>
    <name type="scientific">Borrelia duttonii (strain Ly)</name>
    <dbReference type="NCBI Taxonomy" id="412419"/>
    <lineage>
        <taxon>Bacteria</taxon>
        <taxon>Pseudomonadati</taxon>
        <taxon>Spirochaetota</taxon>
        <taxon>Spirochaetia</taxon>
        <taxon>Spirochaetales</taxon>
        <taxon>Borreliaceae</taxon>
        <taxon>Borrelia</taxon>
    </lineage>
</organism>
<keyword id="KW-0687">Ribonucleoprotein</keyword>
<keyword id="KW-0689">Ribosomal protein</keyword>
<keyword id="KW-0694">RNA-binding</keyword>
<keyword id="KW-0699">rRNA-binding</keyword>
<comment type="function">
    <text evidence="1">This protein binds to the 23S rRNA, and is important in its secondary structure. It is located near the subunit interface in the base of the L7/L12 stalk, and near the tRNA binding site of the peptidyltransferase center.</text>
</comment>
<comment type="subunit">
    <text evidence="1">Part of the 50S ribosomal subunit.</text>
</comment>
<comment type="similarity">
    <text evidence="1">Belongs to the universal ribosomal protein uL6 family.</text>
</comment>
<reference key="1">
    <citation type="journal article" date="2008" name="PLoS Genet.">
        <title>The genome of Borrelia recurrentis, the agent of deadly louse-borne relapsing fever, is a degraded subset of tick-borne Borrelia duttonii.</title>
        <authorList>
            <person name="Lescot M."/>
            <person name="Audic S."/>
            <person name="Robert C."/>
            <person name="Nguyen T.T."/>
            <person name="Blanc G."/>
            <person name="Cutler S.J."/>
            <person name="Wincker P."/>
            <person name="Couloux A."/>
            <person name="Claverie J.-M."/>
            <person name="Raoult D."/>
            <person name="Drancourt M."/>
        </authorList>
    </citation>
    <scope>NUCLEOTIDE SEQUENCE [LARGE SCALE GENOMIC DNA]</scope>
    <source>
        <strain>Ly</strain>
    </source>
</reference>
<dbReference type="EMBL" id="CP000976">
    <property type="protein sequence ID" value="ACH93437.1"/>
    <property type="molecule type" value="Genomic_DNA"/>
</dbReference>
<dbReference type="RefSeq" id="WP_012538247.1">
    <property type="nucleotide sequence ID" value="NC_011229.1"/>
</dbReference>
<dbReference type="SMR" id="B5RM51"/>
<dbReference type="STRING" id="412419.BDU_496"/>
<dbReference type="KEGG" id="bdu:BDU_496"/>
<dbReference type="eggNOG" id="COG0097">
    <property type="taxonomic scope" value="Bacteria"/>
</dbReference>
<dbReference type="HOGENOM" id="CLU_065464_1_2_12"/>
<dbReference type="OrthoDB" id="9805007at2"/>
<dbReference type="Proteomes" id="UP000000611">
    <property type="component" value="Chromosome"/>
</dbReference>
<dbReference type="GO" id="GO:0022625">
    <property type="term" value="C:cytosolic large ribosomal subunit"/>
    <property type="evidence" value="ECO:0007669"/>
    <property type="project" value="TreeGrafter"/>
</dbReference>
<dbReference type="GO" id="GO:0019843">
    <property type="term" value="F:rRNA binding"/>
    <property type="evidence" value="ECO:0007669"/>
    <property type="project" value="UniProtKB-UniRule"/>
</dbReference>
<dbReference type="GO" id="GO:0003735">
    <property type="term" value="F:structural constituent of ribosome"/>
    <property type="evidence" value="ECO:0007669"/>
    <property type="project" value="InterPro"/>
</dbReference>
<dbReference type="GO" id="GO:0002181">
    <property type="term" value="P:cytoplasmic translation"/>
    <property type="evidence" value="ECO:0007669"/>
    <property type="project" value="TreeGrafter"/>
</dbReference>
<dbReference type="FunFam" id="3.90.930.12:FF:000002">
    <property type="entry name" value="50S ribosomal protein L6"/>
    <property type="match status" value="1"/>
</dbReference>
<dbReference type="Gene3D" id="3.90.930.12">
    <property type="entry name" value="Ribosomal protein L6, alpha-beta domain"/>
    <property type="match status" value="2"/>
</dbReference>
<dbReference type="HAMAP" id="MF_01365_B">
    <property type="entry name" value="Ribosomal_uL6_B"/>
    <property type="match status" value="1"/>
</dbReference>
<dbReference type="InterPro" id="IPR000702">
    <property type="entry name" value="Ribosomal_uL6-like"/>
</dbReference>
<dbReference type="InterPro" id="IPR036789">
    <property type="entry name" value="Ribosomal_uL6-like_a/b-dom_sf"/>
</dbReference>
<dbReference type="InterPro" id="IPR020040">
    <property type="entry name" value="Ribosomal_uL6_a/b-dom"/>
</dbReference>
<dbReference type="InterPro" id="IPR019906">
    <property type="entry name" value="Ribosomal_uL6_bac-type"/>
</dbReference>
<dbReference type="InterPro" id="IPR002358">
    <property type="entry name" value="Ribosomal_uL6_CS"/>
</dbReference>
<dbReference type="NCBIfam" id="TIGR03654">
    <property type="entry name" value="L6_bact"/>
    <property type="match status" value="1"/>
</dbReference>
<dbReference type="PANTHER" id="PTHR11655">
    <property type="entry name" value="60S/50S RIBOSOMAL PROTEIN L6/L9"/>
    <property type="match status" value="1"/>
</dbReference>
<dbReference type="PANTHER" id="PTHR11655:SF14">
    <property type="entry name" value="LARGE RIBOSOMAL SUBUNIT PROTEIN UL6M"/>
    <property type="match status" value="1"/>
</dbReference>
<dbReference type="Pfam" id="PF00347">
    <property type="entry name" value="Ribosomal_L6"/>
    <property type="match status" value="2"/>
</dbReference>
<dbReference type="PIRSF" id="PIRSF002162">
    <property type="entry name" value="Ribosomal_L6"/>
    <property type="match status" value="1"/>
</dbReference>
<dbReference type="PRINTS" id="PR00059">
    <property type="entry name" value="RIBOSOMALL6"/>
</dbReference>
<dbReference type="SUPFAM" id="SSF56053">
    <property type="entry name" value="Ribosomal protein L6"/>
    <property type="match status" value="2"/>
</dbReference>
<dbReference type="PROSITE" id="PS00525">
    <property type="entry name" value="RIBOSOMAL_L6_1"/>
    <property type="match status" value="1"/>
</dbReference>
<proteinExistence type="inferred from homology"/>
<name>RL6_BORDL</name>
<gene>
    <name evidence="1" type="primary">rplF</name>
    <name type="ordered locus">BDU_496</name>
</gene>
<protein>
    <recommendedName>
        <fullName evidence="1">Large ribosomal subunit protein uL6</fullName>
    </recommendedName>
    <alternativeName>
        <fullName evidence="2">50S ribosomal protein L6</fullName>
    </alternativeName>
</protein>
<sequence length="180" mass="20169">MSRIGKLPIKIADSVKVDIKDNFITVEGKRGKLSQEINSSIRVKIEDNNIIVERAFNDKQTRAFHGLYRSLIFNMVKGVSDGFSKSLTINGIGYRVEQQGNSLFFNLGYSTQFEYVIPEGINIRLDGNTKIAVEGIDKCRVGQVAAEIRSLKVPEPYKGKGIKYDNEVIRRKVGKSGVKK</sequence>
<accession>B5RM51</accession>